<comment type="function">
    <text evidence="1">Catalyzes the dephosphorylation of 2-phosphoglycolate.</text>
</comment>
<comment type="catalytic activity">
    <reaction evidence="1">
        <text>2-phosphoglycolate + H2O = glycolate + phosphate</text>
        <dbReference type="Rhea" id="RHEA:14369"/>
        <dbReference type="ChEBI" id="CHEBI:15377"/>
        <dbReference type="ChEBI" id="CHEBI:29805"/>
        <dbReference type="ChEBI" id="CHEBI:43474"/>
        <dbReference type="ChEBI" id="CHEBI:58033"/>
        <dbReference type="EC" id="3.1.3.18"/>
    </reaction>
</comment>
<comment type="cofactor">
    <cofactor evidence="1">
        <name>Mg(2+)</name>
        <dbReference type="ChEBI" id="CHEBI:18420"/>
    </cofactor>
</comment>
<comment type="similarity">
    <text evidence="1">Belongs to the archaeal SPP-like hydrolase family.</text>
</comment>
<feature type="chain" id="PRO_0000146718" description="Phosphoglycolate phosphatase">
    <location>
        <begin position="1"/>
        <end position="232"/>
    </location>
</feature>
<feature type="active site" description="Nucleophile" evidence="1">
    <location>
        <position position="8"/>
    </location>
</feature>
<feature type="binding site" evidence="1">
    <location>
        <position position="8"/>
    </location>
    <ligand>
        <name>Mg(2+)</name>
        <dbReference type="ChEBI" id="CHEBI:18420"/>
    </ligand>
</feature>
<feature type="binding site" evidence="1">
    <location>
        <position position="10"/>
    </location>
    <ligand>
        <name>Mg(2+)</name>
        <dbReference type="ChEBI" id="CHEBI:18420"/>
    </ligand>
</feature>
<feature type="binding site" evidence="1">
    <location>
        <position position="156"/>
    </location>
    <ligand>
        <name>substrate</name>
    </ligand>
</feature>
<feature type="binding site" evidence="1">
    <location>
        <position position="179"/>
    </location>
    <ligand>
        <name>Mg(2+)</name>
        <dbReference type="ChEBI" id="CHEBI:18420"/>
    </ligand>
</feature>
<feature type="binding site" evidence="1">
    <location>
        <position position="183"/>
    </location>
    <ligand>
        <name>Mg(2+)</name>
        <dbReference type="ChEBI" id="CHEBI:18420"/>
    </ligand>
</feature>
<accession>Q8TYT9</accession>
<reference key="1">
    <citation type="journal article" date="2002" name="Proc. Natl. Acad. Sci. U.S.A.">
        <title>The complete genome of hyperthermophile Methanopyrus kandleri AV19 and monophyly of archaeal methanogens.</title>
        <authorList>
            <person name="Slesarev A.I."/>
            <person name="Mezhevaya K.V."/>
            <person name="Makarova K.S."/>
            <person name="Polushin N.N."/>
            <person name="Shcherbinina O.V."/>
            <person name="Shakhova V.V."/>
            <person name="Belova G.I."/>
            <person name="Aravind L."/>
            <person name="Natale D.A."/>
            <person name="Rogozin I.B."/>
            <person name="Tatusov R.L."/>
            <person name="Wolf Y.I."/>
            <person name="Stetter K.O."/>
            <person name="Malykh A.G."/>
            <person name="Koonin E.V."/>
            <person name="Kozyavkin S.A."/>
        </authorList>
    </citation>
    <scope>NUCLEOTIDE SEQUENCE [LARGE SCALE GENOMIC DNA]</scope>
    <source>
        <strain>AV19 / DSM 6324 / JCM 9639 / NBRC 100938</strain>
    </source>
</reference>
<protein>
    <recommendedName>
        <fullName evidence="1">Phosphoglycolate phosphatase</fullName>
        <shortName evidence="1">PGP</shortName>
        <shortName evidence="1">PGPase</shortName>
        <ecNumber evidence="1">3.1.3.18</ecNumber>
    </recommendedName>
</protein>
<proteinExistence type="inferred from homology"/>
<keyword id="KW-0119">Carbohydrate metabolism</keyword>
<keyword id="KW-0378">Hydrolase</keyword>
<keyword id="KW-0460">Magnesium</keyword>
<keyword id="KW-0479">Metal-binding</keyword>
<keyword id="KW-1185">Reference proteome</keyword>
<evidence type="ECO:0000255" key="1">
    <source>
        <dbReference type="HAMAP-Rule" id="MF_01419"/>
    </source>
</evidence>
<dbReference type="EC" id="3.1.3.18" evidence="1"/>
<dbReference type="EMBL" id="AE009439">
    <property type="protein sequence ID" value="AAM01420.1"/>
    <property type="molecule type" value="Genomic_DNA"/>
</dbReference>
<dbReference type="RefSeq" id="WP_011018575.1">
    <property type="nucleotide sequence ID" value="NC_003551.1"/>
</dbReference>
<dbReference type="SMR" id="Q8TYT9"/>
<dbReference type="STRING" id="190192.MK0203"/>
<dbReference type="PaxDb" id="190192-MK0203"/>
<dbReference type="EnsemblBacteria" id="AAM01420">
    <property type="protein sequence ID" value="AAM01420"/>
    <property type="gene ID" value="MK0203"/>
</dbReference>
<dbReference type="GeneID" id="1477506"/>
<dbReference type="KEGG" id="mka:MK0203"/>
<dbReference type="HOGENOM" id="CLU_044146_2_0_2"/>
<dbReference type="InParanoid" id="Q8TYT9"/>
<dbReference type="OrthoDB" id="120822at2157"/>
<dbReference type="Proteomes" id="UP000001826">
    <property type="component" value="Chromosome"/>
</dbReference>
<dbReference type="GO" id="GO:0005829">
    <property type="term" value="C:cytosol"/>
    <property type="evidence" value="ECO:0007669"/>
    <property type="project" value="TreeGrafter"/>
</dbReference>
<dbReference type="GO" id="GO:0000287">
    <property type="term" value="F:magnesium ion binding"/>
    <property type="evidence" value="ECO:0007669"/>
    <property type="project" value="InterPro"/>
</dbReference>
<dbReference type="GO" id="GO:0008967">
    <property type="term" value="F:phosphoglycolate phosphatase activity"/>
    <property type="evidence" value="ECO:0007669"/>
    <property type="project" value="UniProtKB-UniRule"/>
</dbReference>
<dbReference type="CDD" id="cd01427">
    <property type="entry name" value="HAD_like"/>
    <property type="match status" value="1"/>
</dbReference>
<dbReference type="CDD" id="cd07514">
    <property type="entry name" value="HAD_Pase"/>
    <property type="match status" value="1"/>
</dbReference>
<dbReference type="Gene3D" id="3.90.1070.10">
    <property type="match status" value="1"/>
</dbReference>
<dbReference type="Gene3D" id="3.40.50.1000">
    <property type="entry name" value="HAD superfamily/HAD-like"/>
    <property type="match status" value="1"/>
</dbReference>
<dbReference type="HAMAP" id="MF_01419">
    <property type="entry name" value="GPH_hydrolase_arch"/>
    <property type="match status" value="1"/>
</dbReference>
<dbReference type="InterPro" id="IPR036412">
    <property type="entry name" value="HAD-like_sf"/>
</dbReference>
<dbReference type="InterPro" id="IPR006379">
    <property type="entry name" value="HAD-SF_hydro_IIB"/>
</dbReference>
<dbReference type="InterPro" id="IPR023214">
    <property type="entry name" value="HAD_sf"/>
</dbReference>
<dbReference type="InterPro" id="IPR006382">
    <property type="entry name" value="PGPase"/>
</dbReference>
<dbReference type="NCBIfam" id="TIGR01484">
    <property type="entry name" value="HAD-SF-IIB"/>
    <property type="match status" value="1"/>
</dbReference>
<dbReference type="NCBIfam" id="TIGR01487">
    <property type="entry name" value="Pglycolate_arch"/>
    <property type="match status" value="1"/>
</dbReference>
<dbReference type="NCBIfam" id="NF002245">
    <property type="entry name" value="PRK01158.1"/>
    <property type="match status" value="1"/>
</dbReference>
<dbReference type="NCBIfam" id="TIGR01482">
    <property type="entry name" value="SPP-subfamily"/>
    <property type="match status" value="1"/>
</dbReference>
<dbReference type="PANTHER" id="PTHR10000:SF8">
    <property type="entry name" value="HAD SUPERFAMILY HYDROLASE-LIKE, TYPE 3"/>
    <property type="match status" value="1"/>
</dbReference>
<dbReference type="PANTHER" id="PTHR10000">
    <property type="entry name" value="PHOSPHOSERINE PHOSPHATASE"/>
    <property type="match status" value="1"/>
</dbReference>
<dbReference type="Pfam" id="PF08282">
    <property type="entry name" value="Hydrolase_3"/>
    <property type="match status" value="2"/>
</dbReference>
<dbReference type="PRINTS" id="PR00119">
    <property type="entry name" value="CATATPASE"/>
</dbReference>
<dbReference type="SFLD" id="SFLDG01140">
    <property type="entry name" value="C2.B:_Phosphomannomutase_and_P"/>
    <property type="match status" value="1"/>
</dbReference>
<dbReference type="SFLD" id="SFLDS00003">
    <property type="entry name" value="Haloacid_Dehalogenase"/>
    <property type="match status" value="1"/>
</dbReference>
<dbReference type="SUPFAM" id="SSF56784">
    <property type="entry name" value="HAD-like"/>
    <property type="match status" value="1"/>
</dbReference>
<sequence length="232" mass="25162">MTSLVITDIDGTITGDDRAVHLKCIRYLRELQKRGIPVGIATGNTLCYSRSAATLLGFEGPLIAENGGIVAVDDEEISTVPEEDIELIQEAYRELRRRLGVRRTEPPGLRRTEVAIYRDVPIEEVERVLDGLGYSGRIEVVDTGFAYHLKSKRVDKGKGLLVICERLGIDPDDVVAIGDGDNDAPLLKAAGLGVAPANATENVKRIADVVLDAENGEGVATFLRKLLEEVDA</sequence>
<name>PGP_METKA</name>
<organism>
    <name type="scientific">Methanopyrus kandleri (strain AV19 / DSM 6324 / JCM 9639 / NBRC 100938)</name>
    <dbReference type="NCBI Taxonomy" id="190192"/>
    <lineage>
        <taxon>Archaea</taxon>
        <taxon>Methanobacteriati</taxon>
        <taxon>Methanobacteriota</taxon>
        <taxon>Methanomada group</taxon>
        <taxon>Methanopyri</taxon>
        <taxon>Methanopyrales</taxon>
        <taxon>Methanopyraceae</taxon>
        <taxon>Methanopyrus</taxon>
    </lineage>
</organism>
<gene>
    <name type="ordered locus">MK0203</name>
</gene>